<sequence>MSQARTLHRLIAPAVEALGFELVGCELFRRGATTILQVFVDKPGGIGLDECAKVSRQISAVLDVEDPIRGRYTLEVSSPGLERPLYTANHYRRFIGNKAKIRLREPREGQRQFRGMVVAVDNEEQVTLQLDNKILKVSLGEIEKANLIADFEG</sequence>
<protein>
    <recommendedName>
        <fullName evidence="1">Ribosome maturation factor RimP</fullName>
    </recommendedName>
</protein>
<name>RIMP_COXBR</name>
<reference key="1">
    <citation type="submission" date="2007-11" db="EMBL/GenBank/DDBJ databases">
        <title>Genome sequencing of phylogenetically and phenotypically diverse Coxiella burnetii isolates.</title>
        <authorList>
            <person name="Seshadri R."/>
            <person name="Samuel J.E."/>
        </authorList>
    </citation>
    <scope>NUCLEOTIDE SEQUENCE [LARGE SCALE GENOMIC DNA]</scope>
    <source>
        <strain>RSA 331 / Henzerling II</strain>
    </source>
</reference>
<dbReference type="EMBL" id="CP000890">
    <property type="protein sequence ID" value="ABX77922.1"/>
    <property type="molecule type" value="Genomic_DNA"/>
</dbReference>
<dbReference type="RefSeq" id="WP_010958225.1">
    <property type="nucleotide sequence ID" value="NC_010117.1"/>
</dbReference>
<dbReference type="SMR" id="A9N8V8"/>
<dbReference type="KEGG" id="cbs:COXBURSA331_A1602"/>
<dbReference type="HOGENOM" id="CLU_070525_1_1_6"/>
<dbReference type="GO" id="GO:0005829">
    <property type="term" value="C:cytosol"/>
    <property type="evidence" value="ECO:0007669"/>
    <property type="project" value="TreeGrafter"/>
</dbReference>
<dbReference type="GO" id="GO:0000028">
    <property type="term" value="P:ribosomal small subunit assembly"/>
    <property type="evidence" value="ECO:0007669"/>
    <property type="project" value="TreeGrafter"/>
</dbReference>
<dbReference type="GO" id="GO:0006412">
    <property type="term" value="P:translation"/>
    <property type="evidence" value="ECO:0007669"/>
    <property type="project" value="TreeGrafter"/>
</dbReference>
<dbReference type="CDD" id="cd01734">
    <property type="entry name" value="YlxS_C"/>
    <property type="match status" value="1"/>
</dbReference>
<dbReference type="FunFam" id="3.30.300.70:FF:000001">
    <property type="entry name" value="Ribosome maturation factor RimP"/>
    <property type="match status" value="1"/>
</dbReference>
<dbReference type="Gene3D" id="2.30.30.180">
    <property type="entry name" value="Ribosome maturation factor RimP, C-terminal domain"/>
    <property type="match status" value="1"/>
</dbReference>
<dbReference type="Gene3D" id="3.30.300.70">
    <property type="entry name" value="RimP-like superfamily, N-terminal"/>
    <property type="match status" value="1"/>
</dbReference>
<dbReference type="HAMAP" id="MF_01077">
    <property type="entry name" value="RimP"/>
    <property type="match status" value="1"/>
</dbReference>
<dbReference type="InterPro" id="IPR003728">
    <property type="entry name" value="Ribosome_maturation_RimP"/>
</dbReference>
<dbReference type="InterPro" id="IPR028998">
    <property type="entry name" value="RimP_C"/>
</dbReference>
<dbReference type="InterPro" id="IPR036847">
    <property type="entry name" value="RimP_C_sf"/>
</dbReference>
<dbReference type="InterPro" id="IPR028989">
    <property type="entry name" value="RimP_N"/>
</dbReference>
<dbReference type="InterPro" id="IPR035956">
    <property type="entry name" value="RimP_N_sf"/>
</dbReference>
<dbReference type="NCBIfam" id="NF000927">
    <property type="entry name" value="PRK00092.1-1"/>
    <property type="match status" value="1"/>
</dbReference>
<dbReference type="PANTHER" id="PTHR33867">
    <property type="entry name" value="RIBOSOME MATURATION FACTOR RIMP"/>
    <property type="match status" value="1"/>
</dbReference>
<dbReference type="PANTHER" id="PTHR33867:SF1">
    <property type="entry name" value="RIBOSOME MATURATION FACTOR RIMP"/>
    <property type="match status" value="1"/>
</dbReference>
<dbReference type="Pfam" id="PF17384">
    <property type="entry name" value="DUF150_C"/>
    <property type="match status" value="1"/>
</dbReference>
<dbReference type="Pfam" id="PF02576">
    <property type="entry name" value="RimP_N"/>
    <property type="match status" value="1"/>
</dbReference>
<dbReference type="SUPFAM" id="SSF74942">
    <property type="entry name" value="YhbC-like, C-terminal domain"/>
    <property type="match status" value="1"/>
</dbReference>
<dbReference type="SUPFAM" id="SSF75420">
    <property type="entry name" value="YhbC-like, N-terminal domain"/>
    <property type="match status" value="1"/>
</dbReference>
<comment type="function">
    <text evidence="1">Required for maturation of 30S ribosomal subunits.</text>
</comment>
<comment type="subcellular location">
    <subcellularLocation>
        <location evidence="1">Cytoplasm</location>
    </subcellularLocation>
</comment>
<comment type="similarity">
    <text evidence="1">Belongs to the RimP family.</text>
</comment>
<gene>
    <name evidence="1" type="primary">rimP</name>
    <name type="ordered locus">COXBURSA331_A1602</name>
</gene>
<proteinExistence type="inferred from homology"/>
<organism>
    <name type="scientific">Coxiella burnetii (strain RSA 331 / Henzerling II)</name>
    <dbReference type="NCBI Taxonomy" id="360115"/>
    <lineage>
        <taxon>Bacteria</taxon>
        <taxon>Pseudomonadati</taxon>
        <taxon>Pseudomonadota</taxon>
        <taxon>Gammaproteobacteria</taxon>
        <taxon>Legionellales</taxon>
        <taxon>Coxiellaceae</taxon>
        <taxon>Coxiella</taxon>
    </lineage>
</organism>
<feature type="chain" id="PRO_1000084523" description="Ribosome maturation factor RimP">
    <location>
        <begin position="1"/>
        <end position="153"/>
    </location>
</feature>
<keyword id="KW-0963">Cytoplasm</keyword>
<keyword id="KW-0690">Ribosome biogenesis</keyword>
<evidence type="ECO:0000255" key="1">
    <source>
        <dbReference type="HAMAP-Rule" id="MF_01077"/>
    </source>
</evidence>
<accession>A9N8V8</accession>